<proteinExistence type="inferred from homology"/>
<accession>A5DVG6</accession>
<organism>
    <name type="scientific">Lodderomyces elongisporus (strain ATCC 11503 / CBS 2605 / JCM 1781 / NBRC 1676 / NRRL YB-4239)</name>
    <name type="common">Yeast</name>
    <name type="synonym">Saccharomyces elongisporus</name>
    <dbReference type="NCBI Taxonomy" id="379508"/>
    <lineage>
        <taxon>Eukaryota</taxon>
        <taxon>Fungi</taxon>
        <taxon>Dikarya</taxon>
        <taxon>Ascomycota</taxon>
        <taxon>Saccharomycotina</taxon>
        <taxon>Pichiomycetes</taxon>
        <taxon>Debaryomycetaceae</taxon>
        <taxon>Candida/Lodderomyces clade</taxon>
        <taxon>Lodderomyces</taxon>
    </lineage>
</organism>
<feature type="chain" id="PRO_0000324399" description="Protein LOT5">
    <location>
        <begin position="1"/>
        <end position="244"/>
    </location>
</feature>
<feature type="region of interest" description="Disordered" evidence="2">
    <location>
        <begin position="156"/>
        <end position="176"/>
    </location>
</feature>
<feature type="region of interest" description="Disordered" evidence="2">
    <location>
        <begin position="222"/>
        <end position="244"/>
    </location>
</feature>
<feature type="compositionally biased region" description="Acidic residues" evidence="2">
    <location>
        <begin position="161"/>
        <end position="171"/>
    </location>
</feature>
<name>LOT5_LODEL</name>
<reference key="1">
    <citation type="journal article" date="2009" name="Nature">
        <title>Evolution of pathogenicity and sexual reproduction in eight Candida genomes.</title>
        <authorList>
            <person name="Butler G."/>
            <person name="Rasmussen M.D."/>
            <person name="Lin M.F."/>
            <person name="Santos M.A.S."/>
            <person name="Sakthikumar S."/>
            <person name="Munro C.A."/>
            <person name="Rheinbay E."/>
            <person name="Grabherr M."/>
            <person name="Forche A."/>
            <person name="Reedy J.L."/>
            <person name="Agrafioti I."/>
            <person name="Arnaud M.B."/>
            <person name="Bates S."/>
            <person name="Brown A.J.P."/>
            <person name="Brunke S."/>
            <person name="Costanzo M.C."/>
            <person name="Fitzpatrick D.A."/>
            <person name="de Groot P.W.J."/>
            <person name="Harris D."/>
            <person name="Hoyer L.L."/>
            <person name="Hube B."/>
            <person name="Klis F.M."/>
            <person name="Kodira C."/>
            <person name="Lennard N."/>
            <person name="Logue M.E."/>
            <person name="Martin R."/>
            <person name="Neiman A.M."/>
            <person name="Nikolaou E."/>
            <person name="Quail M.A."/>
            <person name="Quinn J."/>
            <person name="Santos M.C."/>
            <person name="Schmitzberger F.F."/>
            <person name="Sherlock G."/>
            <person name="Shah P."/>
            <person name="Silverstein K.A.T."/>
            <person name="Skrzypek M.S."/>
            <person name="Soll D."/>
            <person name="Staggs R."/>
            <person name="Stansfield I."/>
            <person name="Stumpf M.P.H."/>
            <person name="Sudbery P.E."/>
            <person name="Srikantha T."/>
            <person name="Zeng Q."/>
            <person name="Berman J."/>
            <person name="Berriman M."/>
            <person name="Heitman J."/>
            <person name="Gow N.A.R."/>
            <person name="Lorenz M.C."/>
            <person name="Birren B.W."/>
            <person name="Kellis M."/>
            <person name="Cuomo C.A."/>
        </authorList>
    </citation>
    <scope>NUCLEOTIDE SEQUENCE [LARGE SCALE GENOMIC DNA]</scope>
    <source>
        <strain>ATCC 11503 / BCRC 21390 / CBS 2605 / JCM 1781 / NBRC 1676 / NRRL YB-4239</strain>
    </source>
</reference>
<gene>
    <name type="primary">LOT5</name>
    <name type="ORF">LELG_01352</name>
</gene>
<protein>
    <recommendedName>
        <fullName>Protein LOT5</fullName>
    </recommendedName>
</protein>
<evidence type="ECO:0000250" key="1"/>
<evidence type="ECO:0000256" key="2">
    <source>
        <dbReference type="SAM" id="MobiDB-lite"/>
    </source>
</evidence>
<evidence type="ECO:0000305" key="3"/>
<keyword id="KW-0963">Cytoplasm</keyword>
<keyword id="KW-0539">Nucleus</keyword>
<keyword id="KW-1185">Reference proteome</keyword>
<dbReference type="EMBL" id="CH981525">
    <property type="protein sequence ID" value="EDK43174.1"/>
    <property type="molecule type" value="Genomic_DNA"/>
</dbReference>
<dbReference type="RefSeq" id="XP_001526524.1">
    <property type="nucleotide sequence ID" value="XM_001526474.1"/>
</dbReference>
<dbReference type="STRING" id="379508.A5DVG6"/>
<dbReference type="GeneID" id="5234559"/>
<dbReference type="KEGG" id="lel:PVL30_001323"/>
<dbReference type="VEuPathDB" id="FungiDB:LELG_01352"/>
<dbReference type="eggNOG" id="ENOG502RY1I">
    <property type="taxonomic scope" value="Eukaryota"/>
</dbReference>
<dbReference type="HOGENOM" id="CLU_087379_0_0_1"/>
<dbReference type="InParanoid" id="A5DVG6"/>
<dbReference type="OMA" id="HEQPNVE"/>
<dbReference type="OrthoDB" id="19714at2759"/>
<dbReference type="Proteomes" id="UP000001996">
    <property type="component" value="Unassembled WGS sequence"/>
</dbReference>
<dbReference type="GO" id="GO:0005829">
    <property type="term" value="C:cytosol"/>
    <property type="evidence" value="ECO:0007669"/>
    <property type="project" value="TreeGrafter"/>
</dbReference>
<dbReference type="GO" id="GO:0034715">
    <property type="term" value="C:pICln-Sm protein complex"/>
    <property type="evidence" value="ECO:0007669"/>
    <property type="project" value="TreeGrafter"/>
</dbReference>
<dbReference type="GO" id="GO:0005681">
    <property type="term" value="C:spliceosomal complex"/>
    <property type="evidence" value="ECO:0007669"/>
    <property type="project" value="TreeGrafter"/>
</dbReference>
<dbReference type="GO" id="GO:0045292">
    <property type="term" value="P:mRNA cis splicing, via spliceosome"/>
    <property type="evidence" value="ECO:0007669"/>
    <property type="project" value="TreeGrafter"/>
</dbReference>
<dbReference type="GO" id="GO:0000387">
    <property type="term" value="P:spliceosomal snRNP assembly"/>
    <property type="evidence" value="ECO:0007669"/>
    <property type="project" value="TreeGrafter"/>
</dbReference>
<dbReference type="Gene3D" id="2.30.29.30">
    <property type="entry name" value="Pleckstrin-homology domain (PH domain)/Phosphotyrosine-binding domain (PTB)"/>
    <property type="match status" value="1"/>
</dbReference>
<dbReference type="InterPro" id="IPR039924">
    <property type="entry name" value="ICln/Lot5/Saf5"/>
</dbReference>
<dbReference type="InterPro" id="IPR011993">
    <property type="entry name" value="PH-like_dom_sf"/>
</dbReference>
<dbReference type="PANTHER" id="PTHR21399">
    <property type="entry name" value="CHLORIDE CONDUCTANCE REGULATORY PROTEIN ICLN"/>
    <property type="match status" value="1"/>
</dbReference>
<dbReference type="PANTHER" id="PTHR21399:SF0">
    <property type="entry name" value="METHYLOSOME SUBUNIT PICLN"/>
    <property type="match status" value="1"/>
</dbReference>
<dbReference type="Pfam" id="PF03517">
    <property type="entry name" value="Voldacs"/>
    <property type="match status" value="1"/>
</dbReference>
<comment type="subcellular location">
    <subcellularLocation>
        <location evidence="1">Cytoplasm</location>
    </subcellularLocation>
    <subcellularLocation>
        <location evidence="1">Nucleus</location>
    </subcellularLocation>
</comment>
<comment type="similarity">
    <text evidence="3">Belongs to the LOT5 family.</text>
</comment>
<sequence length="244" mass="27008">MSPSIKLIHEQPNVENTILYHAYRASSPARFSSGDDDKFIMYGGSGLCSIISGTLRNFTLDQCSIFVLSSCFIIWSETDGLGFEIPYQSIYLHALDDTGMLYLQIENNRLHESDENTVELRLLPNQEDSSSLSNPLFREMNGGALDIYHAMNTCSAMHPDPDDENEEEEEHSELPLAIPSNWLEKEFIANSGQADDLNDYEIRDGHAGMSVGIGYGPIAGIKRDAGGDELAGSGLPNKRNRTLQ</sequence>